<organism>
    <name type="scientific">Salmonella paratyphi A (strain AKU_12601)</name>
    <dbReference type="NCBI Taxonomy" id="554290"/>
    <lineage>
        <taxon>Bacteria</taxon>
        <taxon>Pseudomonadati</taxon>
        <taxon>Pseudomonadota</taxon>
        <taxon>Gammaproteobacteria</taxon>
        <taxon>Enterobacterales</taxon>
        <taxon>Enterobacteriaceae</taxon>
        <taxon>Salmonella</taxon>
    </lineage>
</organism>
<keyword id="KW-0963">Cytoplasm</keyword>
<keyword id="KW-0342">GTP-binding</keyword>
<keyword id="KW-0436">Ligase</keyword>
<keyword id="KW-0460">Magnesium</keyword>
<keyword id="KW-0479">Metal-binding</keyword>
<keyword id="KW-0547">Nucleotide-binding</keyword>
<keyword id="KW-0658">Purine biosynthesis</keyword>
<sequence length="432" mass="47405">MGNNVVVLGTQWGDEGKGKIVDLLTERAKYVVRYQGGHNAGHTLVINGEKTVLHLIPSGILRENVTSIIGNGVVLSPSALMKEMKELEDRGIPVRERLLLSEACPLILDYHVALDNAREKARGAKAIGTTGRGIGPAYEDKVARRGLRVGDLFDKETFAEKLKEVMEYHNFQLVNYYKVEAVDYQKVLDDTMAVADILTSMVVDVSDLLDQARQRGDFVMFEGAQGTLLDIDHGTYPYVTSSNTTAGGVATGSGLGPRYVDYVLGILKAYSTRVGAGPFPTELFDETGEFLCKQGNEYGATTGRRRRTGWLDTVAVRRAVQLNSLSGFCLTKLDVLDGLKEVKLCVAYRMPDGREVTTTPLAADDWKGVEPIYETMPGWSESTFGVKDRSGLPQAALNYIKRIEELTGVPIDIISTGPDRTETMILRDPFDA</sequence>
<feature type="chain" id="PRO_1000089338" description="Adenylosuccinate synthetase">
    <location>
        <begin position="1"/>
        <end position="432"/>
    </location>
</feature>
<feature type="active site" description="Proton acceptor" evidence="1">
    <location>
        <position position="14"/>
    </location>
</feature>
<feature type="active site" description="Proton donor" evidence="1">
    <location>
        <position position="42"/>
    </location>
</feature>
<feature type="binding site" evidence="1">
    <location>
        <begin position="13"/>
        <end position="19"/>
    </location>
    <ligand>
        <name>GTP</name>
        <dbReference type="ChEBI" id="CHEBI:37565"/>
    </ligand>
</feature>
<feature type="binding site" description="in other chain" evidence="1">
    <location>
        <begin position="14"/>
        <end position="17"/>
    </location>
    <ligand>
        <name>IMP</name>
        <dbReference type="ChEBI" id="CHEBI:58053"/>
        <note>ligand shared between dimeric partners</note>
    </ligand>
</feature>
<feature type="binding site" evidence="1">
    <location>
        <position position="14"/>
    </location>
    <ligand>
        <name>Mg(2+)</name>
        <dbReference type="ChEBI" id="CHEBI:18420"/>
    </ligand>
</feature>
<feature type="binding site" description="in other chain" evidence="1">
    <location>
        <begin position="39"/>
        <end position="42"/>
    </location>
    <ligand>
        <name>IMP</name>
        <dbReference type="ChEBI" id="CHEBI:58053"/>
        <note>ligand shared between dimeric partners</note>
    </ligand>
</feature>
<feature type="binding site" evidence="1">
    <location>
        <begin position="41"/>
        <end position="43"/>
    </location>
    <ligand>
        <name>GTP</name>
        <dbReference type="ChEBI" id="CHEBI:37565"/>
    </ligand>
</feature>
<feature type="binding site" evidence="1">
    <location>
        <position position="41"/>
    </location>
    <ligand>
        <name>Mg(2+)</name>
        <dbReference type="ChEBI" id="CHEBI:18420"/>
    </ligand>
</feature>
<feature type="binding site" description="in other chain" evidence="1">
    <location>
        <position position="130"/>
    </location>
    <ligand>
        <name>IMP</name>
        <dbReference type="ChEBI" id="CHEBI:58053"/>
        <note>ligand shared between dimeric partners</note>
    </ligand>
</feature>
<feature type="binding site" evidence="1">
    <location>
        <position position="144"/>
    </location>
    <ligand>
        <name>IMP</name>
        <dbReference type="ChEBI" id="CHEBI:58053"/>
        <note>ligand shared between dimeric partners</note>
    </ligand>
</feature>
<feature type="binding site" description="in other chain" evidence="1">
    <location>
        <position position="225"/>
    </location>
    <ligand>
        <name>IMP</name>
        <dbReference type="ChEBI" id="CHEBI:58053"/>
        <note>ligand shared between dimeric partners</note>
    </ligand>
</feature>
<feature type="binding site" description="in other chain" evidence="1">
    <location>
        <position position="240"/>
    </location>
    <ligand>
        <name>IMP</name>
        <dbReference type="ChEBI" id="CHEBI:58053"/>
        <note>ligand shared between dimeric partners</note>
    </ligand>
</feature>
<feature type="binding site" evidence="1">
    <location>
        <begin position="300"/>
        <end position="306"/>
    </location>
    <ligand>
        <name>substrate</name>
    </ligand>
</feature>
<feature type="binding site" description="in other chain" evidence="1">
    <location>
        <position position="304"/>
    </location>
    <ligand>
        <name>IMP</name>
        <dbReference type="ChEBI" id="CHEBI:58053"/>
        <note>ligand shared between dimeric partners</note>
    </ligand>
</feature>
<feature type="binding site" evidence="1">
    <location>
        <position position="306"/>
    </location>
    <ligand>
        <name>GTP</name>
        <dbReference type="ChEBI" id="CHEBI:37565"/>
    </ligand>
</feature>
<feature type="binding site" evidence="1">
    <location>
        <begin position="332"/>
        <end position="334"/>
    </location>
    <ligand>
        <name>GTP</name>
        <dbReference type="ChEBI" id="CHEBI:37565"/>
    </ligand>
</feature>
<feature type="binding site" evidence="1">
    <location>
        <begin position="415"/>
        <end position="417"/>
    </location>
    <ligand>
        <name>GTP</name>
        <dbReference type="ChEBI" id="CHEBI:37565"/>
    </ligand>
</feature>
<gene>
    <name evidence="1" type="primary">purA</name>
    <name type="ordered locus">SSPA3882</name>
</gene>
<proteinExistence type="inferred from homology"/>
<accession>B5BKI5</accession>
<comment type="function">
    <text evidence="1">Plays an important role in the de novo pathway of purine nucleotide biosynthesis. Catalyzes the first committed step in the biosynthesis of AMP from IMP.</text>
</comment>
<comment type="catalytic activity">
    <reaction evidence="1">
        <text>IMP + L-aspartate + GTP = N(6)-(1,2-dicarboxyethyl)-AMP + GDP + phosphate + 2 H(+)</text>
        <dbReference type="Rhea" id="RHEA:15753"/>
        <dbReference type="ChEBI" id="CHEBI:15378"/>
        <dbReference type="ChEBI" id="CHEBI:29991"/>
        <dbReference type="ChEBI" id="CHEBI:37565"/>
        <dbReference type="ChEBI" id="CHEBI:43474"/>
        <dbReference type="ChEBI" id="CHEBI:57567"/>
        <dbReference type="ChEBI" id="CHEBI:58053"/>
        <dbReference type="ChEBI" id="CHEBI:58189"/>
        <dbReference type="EC" id="6.3.4.4"/>
    </reaction>
</comment>
<comment type="cofactor">
    <cofactor evidence="1">
        <name>Mg(2+)</name>
        <dbReference type="ChEBI" id="CHEBI:18420"/>
    </cofactor>
    <text evidence="1">Binds 1 Mg(2+) ion per subunit.</text>
</comment>
<comment type="pathway">
    <text evidence="1">Purine metabolism; AMP biosynthesis via de novo pathway; AMP from IMP: step 1/2.</text>
</comment>
<comment type="subunit">
    <text evidence="1">Homodimer.</text>
</comment>
<comment type="subcellular location">
    <subcellularLocation>
        <location evidence="1">Cytoplasm</location>
    </subcellularLocation>
</comment>
<comment type="similarity">
    <text evidence="1">Belongs to the adenylosuccinate synthetase family.</text>
</comment>
<dbReference type="EC" id="6.3.4.4" evidence="1"/>
<dbReference type="EMBL" id="FM200053">
    <property type="protein sequence ID" value="CAR62169.1"/>
    <property type="molecule type" value="Genomic_DNA"/>
</dbReference>
<dbReference type="RefSeq" id="WP_000527976.1">
    <property type="nucleotide sequence ID" value="NC_011147.1"/>
</dbReference>
<dbReference type="SMR" id="B5BKI5"/>
<dbReference type="KEGG" id="sek:SSPA3882"/>
<dbReference type="HOGENOM" id="CLU_029848_0_0_6"/>
<dbReference type="UniPathway" id="UPA00075">
    <property type="reaction ID" value="UER00335"/>
</dbReference>
<dbReference type="Proteomes" id="UP000001869">
    <property type="component" value="Chromosome"/>
</dbReference>
<dbReference type="GO" id="GO:0005737">
    <property type="term" value="C:cytoplasm"/>
    <property type="evidence" value="ECO:0007669"/>
    <property type="project" value="UniProtKB-SubCell"/>
</dbReference>
<dbReference type="GO" id="GO:0004019">
    <property type="term" value="F:adenylosuccinate synthase activity"/>
    <property type="evidence" value="ECO:0007669"/>
    <property type="project" value="UniProtKB-UniRule"/>
</dbReference>
<dbReference type="GO" id="GO:0005525">
    <property type="term" value="F:GTP binding"/>
    <property type="evidence" value="ECO:0007669"/>
    <property type="project" value="UniProtKB-UniRule"/>
</dbReference>
<dbReference type="GO" id="GO:0000287">
    <property type="term" value="F:magnesium ion binding"/>
    <property type="evidence" value="ECO:0007669"/>
    <property type="project" value="UniProtKB-UniRule"/>
</dbReference>
<dbReference type="GO" id="GO:0044208">
    <property type="term" value="P:'de novo' AMP biosynthetic process"/>
    <property type="evidence" value="ECO:0007669"/>
    <property type="project" value="UniProtKB-UniRule"/>
</dbReference>
<dbReference type="GO" id="GO:0046040">
    <property type="term" value="P:IMP metabolic process"/>
    <property type="evidence" value="ECO:0007669"/>
    <property type="project" value="TreeGrafter"/>
</dbReference>
<dbReference type="CDD" id="cd03108">
    <property type="entry name" value="AdSS"/>
    <property type="match status" value="1"/>
</dbReference>
<dbReference type="FunFam" id="1.10.300.10:FF:000001">
    <property type="entry name" value="Adenylosuccinate synthetase"/>
    <property type="match status" value="1"/>
</dbReference>
<dbReference type="FunFam" id="3.90.170.10:FF:000001">
    <property type="entry name" value="Adenylosuccinate synthetase"/>
    <property type="match status" value="1"/>
</dbReference>
<dbReference type="Gene3D" id="3.40.440.10">
    <property type="entry name" value="Adenylosuccinate Synthetase, subunit A, domain 1"/>
    <property type="match status" value="1"/>
</dbReference>
<dbReference type="Gene3D" id="1.10.300.10">
    <property type="entry name" value="Adenylosuccinate Synthetase, subunit A, domain 2"/>
    <property type="match status" value="1"/>
</dbReference>
<dbReference type="Gene3D" id="3.90.170.10">
    <property type="entry name" value="Adenylosuccinate Synthetase, subunit A, domain 3"/>
    <property type="match status" value="1"/>
</dbReference>
<dbReference type="HAMAP" id="MF_00011">
    <property type="entry name" value="Adenylosucc_synth"/>
    <property type="match status" value="1"/>
</dbReference>
<dbReference type="InterPro" id="IPR018220">
    <property type="entry name" value="Adenylosuccin_syn_GTP-bd"/>
</dbReference>
<dbReference type="InterPro" id="IPR033128">
    <property type="entry name" value="Adenylosuccin_syn_Lys_AS"/>
</dbReference>
<dbReference type="InterPro" id="IPR042109">
    <property type="entry name" value="Adenylosuccinate_synth_dom1"/>
</dbReference>
<dbReference type="InterPro" id="IPR042110">
    <property type="entry name" value="Adenylosuccinate_synth_dom2"/>
</dbReference>
<dbReference type="InterPro" id="IPR042111">
    <property type="entry name" value="Adenylosuccinate_synth_dom3"/>
</dbReference>
<dbReference type="InterPro" id="IPR001114">
    <property type="entry name" value="Adenylosuccinate_synthetase"/>
</dbReference>
<dbReference type="InterPro" id="IPR027417">
    <property type="entry name" value="P-loop_NTPase"/>
</dbReference>
<dbReference type="NCBIfam" id="NF002223">
    <property type="entry name" value="PRK01117.1"/>
    <property type="match status" value="1"/>
</dbReference>
<dbReference type="NCBIfam" id="TIGR00184">
    <property type="entry name" value="purA"/>
    <property type="match status" value="1"/>
</dbReference>
<dbReference type="PANTHER" id="PTHR11846">
    <property type="entry name" value="ADENYLOSUCCINATE SYNTHETASE"/>
    <property type="match status" value="1"/>
</dbReference>
<dbReference type="PANTHER" id="PTHR11846:SF0">
    <property type="entry name" value="ADENYLOSUCCINATE SYNTHETASE"/>
    <property type="match status" value="1"/>
</dbReference>
<dbReference type="Pfam" id="PF00709">
    <property type="entry name" value="Adenylsucc_synt"/>
    <property type="match status" value="1"/>
</dbReference>
<dbReference type="SMART" id="SM00788">
    <property type="entry name" value="Adenylsucc_synt"/>
    <property type="match status" value="1"/>
</dbReference>
<dbReference type="SUPFAM" id="SSF52540">
    <property type="entry name" value="P-loop containing nucleoside triphosphate hydrolases"/>
    <property type="match status" value="1"/>
</dbReference>
<dbReference type="PROSITE" id="PS01266">
    <property type="entry name" value="ADENYLOSUCCIN_SYN_1"/>
    <property type="match status" value="1"/>
</dbReference>
<dbReference type="PROSITE" id="PS00513">
    <property type="entry name" value="ADENYLOSUCCIN_SYN_2"/>
    <property type="match status" value="1"/>
</dbReference>
<name>PURA_SALPK</name>
<protein>
    <recommendedName>
        <fullName evidence="1">Adenylosuccinate synthetase</fullName>
        <shortName evidence="1">AMPSase</shortName>
        <shortName evidence="1">AdSS</shortName>
        <ecNumber evidence="1">6.3.4.4</ecNumber>
    </recommendedName>
    <alternativeName>
        <fullName evidence="1">IMP--aspartate ligase</fullName>
    </alternativeName>
</protein>
<evidence type="ECO:0000255" key="1">
    <source>
        <dbReference type="HAMAP-Rule" id="MF_00011"/>
    </source>
</evidence>
<reference key="1">
    <citation type="journal article" date="2009" name="BMC Genomics">
        <title>Pseudogene accumulation in the evolutionary histories of Salmonella enterica serovars Paratyphi A and Typhi.</title>
        <authorList>
            <person name="Holt K.E."/>
            <person name="Thomson N.R."/>
            <person name="Wain J."/>
            <person name="Langridge G.C."/>
            <person name="Hasan R."/>
            <person name="Bhutta Z.A."/>
            <person name="Quail M.A."/>
            <person name="Norbertczak H."/>
            <person name="Walker D."/>
            <person name="Simmonds M."/>
            <person name="White B."/>
            <person name="Bason N."/>
            <person name="Mungall K."/>
            <person name="Dougan G."/>
            <person name="Parkhill J."/>
        </authorList>
    </citation>
    <scope>NUCLEOTIDE SEQUENCE [LARGE SCALE GENOMIC DNA]</scope>
    <source>
        <strain>AKU_12601</strain>
    </source>
</reference>